<reference key="1">
    <citation type="submission" date="1999-12" db="EMBL/GenBank/DDBJ databases">
        <title>Development of primer sets for direct sequence determination of all the ribosomal operons of Escherichia coli.</title>
        <authorList>
            <person name="Ohnishi M."/>
            <person name="Murata T."/>
            <person name="Nakayama K."/>
            <person name="Kuhara S."/>
            <person name="Hattori M."/>
            <person name="Kurokawa K."/>
            <person name="Yasunaga T."/>
            <person name="Makino K."/>
            <person name="Shinagawa H."/>
            <person name="Hayashi T."/>
        </authorList>
    </citation>
    <scope>NUCLEOTIDE SEQUENCE [GENOMIC DNA]</scope>
    <source>
        <strain>O157:H7 / Sakai / RIMD 0509952 / EHEC</strain>
    </source>
</reference>
<reference key="2">
    <citation type="journal article" date="2001" name="Nature">
        <title>Genome sequence of enterohaemorrhagic Escherichia coli O157:H7.</title>
        <authorList>
            <person name="Perna N.T."/>
            <person name="Plunkett G. III"/>
            <person name="Burland V."/>
            <person name="Mau B."/>
            <person name="Glasner J.D."/>
            <person name="Rose D.J."/>
            <person name="Mayhew G.F."/>
            <person name="Evans P.S."/>
            <person name="Gregor J."/>
            <person name="Kirkpatrick H.A."/>
            <person name="Posfai G."/>
            <person name="Hackett J."/>
            <person name="Klink S."/>
            <person name="Boutin A."/>
            <person name="Shao Y."/>
            <person name="Miller L."/>
            <person name="Grotbeck E.J."/>
            <person name="Davis N.W."/>
            <person name="Lim A."/>
            <person name="Dimalanta E.T."/>
            <person name="Potamousis K."/>
            <person name="Apodaca J."/>
            <person name="Anantharaman T.S."/>
            <person name="Lin J."/>
            <person name="Yen G."/>
            <person name="Schwartz D.C."/>
            <person name="Welch R.A."/>
            <person name="Blattner F.R."/>
        </authorList>
    </citation>
    <scope>NUCLEOTIDE SEQUENCE [LARGE SCALE GENOMIC DNA]</scope>
    <source>
        <strain>O157:H7 / EDL933 / ATCC 700927 / EHEC</strain>
    </source>
</reference>
<reference key="3">
    <citation type="journal article" date="2001" name="DNA Res.">
        <title>Complete genome sequence of enterohemorrhagic Escherichia coli O157:H7 and genomic comparison with a laboratory strain K-12.</title>
        <authorList>
            <person name="Hayashi T."/>
            <person name="Makino K."/>
            <person name="Ohnishi M."/>
            <person name="Kurokawa K."/>
            <person name="Ishii K."/>
            <person name="Yokoyama K."/>
            <person name="Han C.-G."/>
            <person name="Ohtsubo E."/>
            <person name="Nakayama K."/>
            <person name="Murata T."/>
            <person name="Tanaka M."/>
            <person name="Tobe T."/>
            <person name="Iida T."/>
            <person name="Takami H."/>
            <person name="Honda T."/>
            <person name="Sasakawa C."/>
            <person name="Ogasawara N."/>
            <person name="Yasunaga T."/>
            <person name="Kuhara S."/>
            <person name="Shiba T."/>
            <person name="Hattori M."/>
            <person name="Shinagawa H."/>
        </authorList>
    </citation>
    <scope>NUCLEOTIDE SEQUENCE [LARGE SCALE GENOMIC DNA]</scope>
    <source>
        <strain>O157:H7 / Sakai / RIMD 0509952 / EHEC</strain>
    </source>
</reference>
<organism>
    <name type="scientific">Escherichia coli O157:H7</name>
    <dbReference type="NCBI Taxonomy" id="83334"/>
    <lineage>
        <taxon>Bacteria</taxon>
        <taxon>Pseudomonadati</taxon>
        <taxon>Pseudomonadota</taxon>
        <taxon>Gammaproteobacteria</taxon>
        <taxon>Enterobacterales</taxon>
        <taxon>Enterobacteriaceae</taxon>
        <taxon>Escherichia</taxon>
    </lineage>
</organism>
<dbReference type="EC" id="1.3.5.3" evidence="1"/>
<dbReference type="EMBL" id="AB035920">
    <property type="protein sequence ID" value="BAA93555.1"/>
    <property type="molecule type" value="Genomic_DNA"/>
</dbReference>
<dbReference type="EMBL" id="AE005174">
    <property type="protein sequence ID" value="AAG59044.1"/>
    <property type="molecule type" value="Genomic_DNA"/>
</dbReference>
<dbReference type="EMBL" id="BA000007">
    <property type="protein sequence ID" value="BAB38201.1"/>
    <property type="molecule type" value="Genomic_DNA"/>
</dbReference>
<dbReference type="PIR" id="B91226">
    <property type="entry name" value="B91226"/>
</dbReference>
<dbReference type="PIR" id="H86072">
    <property type="entry name" value="H86072"/>
</dbReference>
<dbReference type="RefSeq" id="NP_312805.1">
    <property type="nucleotide sequence ID" value="NC_002695.1"/>
</dbReference>
<dbReference type="RefSeq" id="WP_000853959.1">
    <property type="nucleotide sequence ID" value="NZ_VOAI01000017.1"/>
</dbReference>
<dbReference type="SMR" id="P0ACB6"/>
<dbReference type="STRING" id="155864.Z5372"/>
<dbReference type="GeneID" id="75174084"/>
<dbReference type="GeneID" id="915124"/>
<dbReference type="KEGG" id="ece:Z5372"/>
<dbReference type="KEGG" id="ecs:ECs_4778"/>
<dbReference type="PATRIC" id="fig|386585.9.peg.4987"/>
<dbReference type="eggNOG" id="COG4635">
    <property type="taxonomic scope" value="Bacteria"/>
</dbReference>
<dbReference type="HOGENOM" id="CLU_094839_0_1_6"/>
<dbReference type="OMA" id="NPYMKKF"/>
<dbReference type="UniPathway" id="UPA00251">
    <property type="reaction ID" value="UER00324"/>
</dbReference>
<dbReference type="Proteomes" id="UP000000558">
    <property type="component" value="Chromosome"/>
</dbReference>
<dbReference type="Proteomes" id="UP000002519">
    <property type="component" value="Chromosome"/>
</dbReference>
<dbReference type="GO" id="GO:0005886">
    <property type="term" value="C:plasma membrane"/>
    <property type="evidence" value="ECO:0007669"/>
    <property type="project" value="UniProtKB-SubCell"/>
</dbReference>
<dbReference type="GO" id="GO:0009055">
    <property type="term" value="F:electron transfer activity"/>
    <property type="evidence" value="ECO:0007669"/>
    <property type="project" value="InterPro"/>
</dbReference>
<dbReference type="GO" id="GO:0010181">
    <property type="term" value="F:FMN binding"/>
    <property type="evidence" value="ECO:0007669"/>
    <property type="project" value="UniProtKB-UniRule"/>
</dbReference>
<dbReference type="GO" id="GO:0070819">
    <property type="term" value="F:menaquinone-dependent protoporphyrinogen oxidase activity"/>
    <property type="evidence" value="ECO:0007669"/>
    <property type="project" value="UniProtKB-UniRule"/>
</dbReference>
<dbReference type="GO" id="GO:0004729">
    <property type="term" value="F:oxygen-dependent protoporphyrinogen oxidase activity"/>
    <property type="evidence" value="ECO:0007669"/>
    <property type="project" value="InterPro"/>
</dbReference>
<dbReference type="GO" id="GO:0006782">
    <property type="term" value="P:protoporphyrinogen IX biosynthetic process"/>
    <property type="evidence" value="ECO:0007669"/>
    <property type="project" value="UniProtKB-UniRule"/>
</dbReference>
<dbReference type="FunFam" id="3.40.50.360:FF:000017">
    <property type="entry name" value="Protoporphyrinogen oxidase (PPO)"/>
    <property type="match status" value="1"/>
</dbReference>
<dbReference type="Gene3D" id="3.40.50.360">
    <property type="match status" value="1"/>
</dbReference>
<dbReference type="HAMAP" id="MF_00853">
    <property type="entry name" value="HemG"/>
    <property type="match status" value="1"/>
</dbReference>
<dbReference type="InterPro" id="IPR008254">
    <property type="entry name" value="Flavodoxin/NO_synth"/>
</dbReference>
<dbReference type="InterPro" id="IPR001226">
    <property type="entry name" value="Flavodoxin_CS"/>
</dbReference>
<dbReference type="InterPro" id="IPR026816">
    <property type="entry name" value="Flavodoxin_dom"/>
</dbReference>
<dbReference type="InterPro" id="IPR029039">
    <property type="entry name" value="Flavoprotein-like_sf"/>
</dbReference>
<dbReference type="InterPro" id="IPR044264">
    <property type="entry name" value="HemG"/>
</dbReference>
<dbReference type="InterPro" id="IPR052200">
    <property type="entry name" value="Protoporphyrinogen_IX_DH"/>
</dbReference>
<dbReference type="NCBIfam" id="NF008316">
    <property type="entry name" value="PRK11104.1"/>
    <property type="match status" value="1"/>
</dbReference>
<dbReference type="PANTHER" id="PTHR38030">
    <property type="entry name" value="PROTOPORPHYRINOGEN IX DEHYDROGENASE [MENAQUINONE]"/>
    <property type="match status" value="1"/>
</dbReference>
<dbReference type="PANTHER" id="PTHR38030:SF2">
    <property type="entry name" value="PROTOPORPHYRINOGEN IX DEHYDROGENASE [QUINONE]"/>
    <property type="match status" value="1"/>
</dbReference>
<dbReference type="Pfam" id="PF12724">
    <property type="entry name" value="Flavodoxin_5"/>
    <property type="match status" value="1"/>
</dbReference>
<dbReference type="SUPFAM" id="SSF52218">
    <property type="entry name" value="Flavoproteins"/>
    <property type="match status" value="1"/>
</dbReference>
<dbReference type="PROSITE" id="PS00201">
    <property type="entry name" value="FLAVODOXIN"/>
    <property type="match status" value="1"/>
</dbReference>
<dbReference type="PROSITE" id="PS50902">
    <property type="entry name" value="FLAVODOXIN_LIKE"/>
    <property type="match status" value="1"/>
</dbReference>
<gene>
    <name evidence="1" type="primary">hemG</name>
    <name type="ordered locus">Z5372</name>
    <name type="ordered locus">ECs4778</name>
</gene>
<feature type="chain" id="PRO_0000135260" description="Protoporphyrinogen IX dehydrogenase [quinone]">
    <location>
        <begin position="1"/>
        <end position="181"/>
    </location>
</feature>
<feature type="domain" description="Flavodoxin-like" evidence="1">
    <location>
        <begin position="3"/>
        <end position="172"/>
    </location>
</feature>
<feature type="binding site" evidence="1">
    <location>
        <begin position="9"/>
        <end position="13"/>
    </location>
    <ligand>
        <name>FMN</name>
        <dbReference type="ChEBI" id="CHEBI:58210"/>
    </ligand>
</feature>
<feature type="binding site" evidence="1">
    <location>
        <begin position="84"/>
        <end position="152"/>
    </location>
    <ligand>
        <name>FMN</name>
        <dbReference type="ChEBI" id="CHEBI:58210"/>
    </ligand>
</feature>
<accession>P0ACB6</accession>
<accession>P27863</accession>
<proteinExistence type="inferred from homology"/>
<sequence length="181" mass="21226">MKTLILFSTRDGQTREIASYLASELKELGIQADVANVHRIEEPQWENYDRVVIGASIRYGHYHSAFQEFVKKHATRLNSMPSAFYSVNLVARKPEKRTPQTNSYARKFLMNSQWRPDRCAVIAGALRYPRYRWYDRFMIKLIMKMSGGETDTRKEVVYTDWEQVANFAREIAHLTDKPTLK</sequence>
<protein>
    <recommendedName>
        <fullName evidence="1">Protoporphyrinogen IX dehydrogenase [quinone]</fullName>
        <ecNumber evidence="1">1.3.5.3</ecNumber>
    </recommendedName>
    <alternativeName>
        <fullName evidence="1">Protoporphyrinogen IX dehydrogenase [menaquinone]</fullName>
    </alternativeName>
    <alternativeName>
        <fullName evidence="1">Protoporphyrinogen IX dehydrogenase [ubiquinone]</fullName>
    </alternativeName>
    <alternativeName>
        <fullName evidence="1">Protoporphyrinogen oxidase</fullName>
        <shortName evidence="1">PPO</shortName>
    </alternativeName>
</protein>
<name>HEMG_ECO57</name>
<comment type="function">
    <text evidence="1">Catalyzes the 6-electron oxidation of protoporphyrinogen IX to form protoporphyrin IX; under anaerobic conditions uses menaquinone as an electron acceptor, under aerobic condition uses ubiquinone as an electron acceptor.</text>
</comment>
<comment type="catalytic activity">
    <reaction evidence="1">
        <text>protoporphyrinogen IX + 3 a menaquinone = protoporphyrin IX + 3 a menaquinol</text>
        <dbReference type="Rhea" id="RHEA:27409"/>
        <dbReference type="Rhea" id="RHEA-COMP:9537"/>
        <dbReference type="Rhea" id="RHEA-COMP:9539"/>
        <dbReference type="ChEBI" id="CHEBI:16374"/>
        <dbReference type="ChEBI" id="CHEBI:18151"/>
        <dbReference type="ChEBI" id="CHEBI:57306"/>
        <dbReference type="ChEBI" id="CHEBI:57307"/>
        <dbReference type="EC" id="1.3.5.3"/>
    </reaction>
</comment>
<comment type="catalytic activity">
    <reaction evidence="1">
        <text>protoporphyrinogen IX + 3 a ubiquinone = protoporphyrin IX + 3 a ubiquinol</text>
        <dbReference type="Rhea" id="RHEA:63936"/>
        <dbReference type="Rhea" id="RHEA-COMP:9565"/>
        <dbReference type="Rhea" id="RHEA-COMP:9566"/>
        <dbReference type="ChEBI" id="CHEBI:16389"/>
        <dbReference type="ChEBI" id="CHEBI:17976"/>
        <dbReference type="ChEBI" id="CHEBI:57306"/>
        <dbReference type="ChEBI" id="CHEBI:57307"/>
    </reaction>
</comment>
<comment type="catalytic activity">
    <reaction evidence="1">
        <text>protoporphyrinogen IX + 3 a quinone = protoporphyrin IX + 3 a quinol</text>
        <dbReference type="Rhea" id="RHEA:65032"/>
        <dbReference type="ChEBI" id="CHEBI:24646"/>
        <dbReference type="ChEBI" id="CHEBI:57306"/>
        <dbReference type="ChEBI" id="CHEBI:57307"/>
        <dbReference type="ChEBI" id="CHEBI:132124"/>
        <dbReference type="EC" id="1.3.5.3"/>
    </reaction>
</comment>
<comment type="cofactor">
    <cofactor evidence="1">
        <name>FMN</name>
        <dbReference type="ChEBI" id="CHEBI:58210"/>
    </cofactor>
    <text evidence="1">Binds 1 FMN non-covalently per subunit.</text>
</comment>
<comment type="pathway">
    <text evidence="1">Porphyrin-containing compound metabolism; protoporphyrin-IX biosynthesis; protoporphyrin-IX from protoporphyrinogen-IX: step 1/1.</text>
</comment>
<comment type="subcellular location">
    <subcellularLocation>
        <location evidence="1">Cell inner membrane</location>
        <topology evidence="1">Peripheral membrane protein</topology>
    </subcellularLocation>
</comment>
<comment type="similarity">
    <text evidence="1">Belongs to the HemG family.</text>
</comment>
<evidence type="ECO:0000255" key="1">
    <source>
        <dbReference type="HAMAP-Rule" id="MF_00853"/>
    </source>
</evidence>
<keyword id="KW-0997">Cell inner membrane</keyword>
<keyword id="KW-1003">Cell membrane</keyword>
<keyword id="KW-0285">Flavoprotein</keyword>
<keyword id="KW-0288">FMN</keyword>
<keyword id="KW-0472">Membrane</keyword>
<keyword id="KW-0547">Nucleotide-binding</keyword>
<keyword id="KW-0560">Oxidoreductase</keyword>
<keyword id="KW-0627">Porphyrin biosynthesis</keyword>
<keyword id="KW-1185">Reference proteome</keyword>